<dbReference type="EMBL" id="BA000043">
    <property type="protein sequence ID" value="BAD77419.1"/>
    <property type="molecule type" value="Genomic_DNA"/>
</dbReference>
<dbReference type="RefSeq" id="WP_011232604.1">
    <property type="nucleotide sequence ID" value="NC_006510.1"/>
</dbReference>
<dbReference type="SMR" id="Q5KV67"/>
<dbReference type="STRING" id="235909.GK3134"/>
<dbReference type="KEGG" id="gka:GK3134"/>
<dbReference type="PATRIC" id="fig|235909.7.peg.3344"/>
<dbReference type="eggNOG" id="COG1699">
    <property type="taxonomic scope" value="Bacteria"/>
</dbReference>
<dbReference type="HOGENOM" id="CLU_112356_0_2_9"/>
<dbReference type="Proteomes" id="UP000001172">
    <property type="component" value="Chromosome"/>
</dbReference>
<dbReference type="GO" id="GO:0005737">
    <property type="term" value="C:cytoplasm"/>
    <property type="evidence" value="ECO:0007669"/>
    <property type="project" value="UniProtKB-SubCell"/>
</dbReference>
<dbReference type="GO" id="GO:0044780">
    <property type="term" value="P:bacterial-type flagellum assembly"/>
    <property type="evidence" value="ECO:0007669"/>
    <property type="project" value="UniProtKB-UniRule"/>
</dbReference>
<dbReference type="GO" id="GO:0006417">
    <property type="term" value="P:regulation of translation"/>
    <property type="evidence" value="ECO:0007669"/>
    <property type="project" value="UniProtKB-KW"/>
</dbReference>
<dbReference type="Gene3D" id="2.30.290.10">
    <property type="entry name" value="BH3618-like"/>
    <property type="match status" value="1"/>
</dbReference>
<dbReference type="HAMAP" id="MF_01185">
    <property type="entry name" value="FliW"/>
    <property type="match status" value="1"/>
</dbReference>
<dbReference type="InterPro" id="IPR003775">
    <property type="entry name" value="Flagellar_assembly_factor_FliW"/>
</dbReference>
<dbReference type="InterPro" id="IPR024046">
    <property type="entry name" value="Flagellar_assmbl_FliW_dom_sf"/>
</dbReference>
<dbReference type="NCBIfam" id="NF009793">
    <property type="entry name" value="PRK13285.1-1"/>
    <property type="match status" value="1"/>
</dbReference>
<dbReference type="PANTHER" id="PTHR39190">
    <property type="entry name" value="FLAGELLAR ASSEMBLY FACTOR FLIW"/>
    <property type="match status" value="1"/>
</dbReference>
<dbReference type="PANTHER" id="PTHR39190:SF1">
    <property type="entry name" value="FLAGELLAR ASSEMBLY FACTOR FLIW"/>
    <property type="match status" value="1"/>
</dbReference>
<dbReference type="Pfam" id="PF02623">
    <property type="entry name" value="FliW"/>
    <property type="match status" value="1"/>
</dbReference>
<dbReference type="SUPFAM" id="SSF141457">
    <property type="entry name" value="BH3618-like"/>
    <property type="match status" value="1"/>
</dbReference>
<organism>
    <name type="scientific">Geobacillus kaustophilus (strain HTA426)</name>
    <dbReference type="NCBI Taxonomy" id="235909"/>
    <lineage>
        <taxon>Bacteria</taxon>
        <taxon>Bacillati</taxon>
        <taxon>Bacillota</taxon>
        <taxon>Bacilli</taxon>
        <taxon>Bacillales</taxon>
        <taxon>Anoxybacillaceae</taxon>
        <taxon>Geobacillus</taxon>
        <taxon>Geobacillus thermoleovorans group</taxon>
    </lineage>
</organism>
<evidence type="ECO:0000255" key="1">
    <source>
        <dbReference type="HAMAP-Rule" id="MF_01185"/>
    </source>
</evidence>
<accession>Q5KV67</accession>
<keyword id="KW-1005">Bacterial flagellum biogenesis</keyword>
<keyword id="KW-0143">Chaperone</keyword>
<keyword id="KW-0963">Cytoplasm</keyword>
<keyword id="KW-1185">Reference proteome</keyword>
<keyword id="KW-0810">Translation regulation</keyword>
<protein>
    <recommendedName>
        <fullName evidence="1">Flagellar assembly factor FliW</fullName>
    </recommendedName>
</protein>
<proteinExistence type="inferred from homology"/>
<gene>
    <name evidence="1" type="primary">fliW</name>
    <name type="ordered locus">GK3134</name>
</gene>
<comment type="function">
    <text evidence="1">Acts as an anti-CsrA protein, binds CsrA and prevents it from repressing translation of its target genes, one of which is flagellin. Binds to flagellin and participates in the assembly of the flagellum.</text>
</comment>
<comment type="subunit">
    <text evidence="1">Interacts with translational regulator CsrA and flagellin(s).</text>
</comment>
<comment type="subcellular location">
    <subcellularLocation>
        <location evidence="1">Cytoplasm</location>
    </subcellularLocation>
</comment>
<comment type="similarity">
    <text evidence="1">Belongs to the FliW family.</text>
</comment>
<feature type="chain" id="PRO_0000272988" description="Flagellar assembly factor FliW">
    <location>
        <begin position="1"/>
        <end position="144"/>
    </location>
</feature>
<reference key="1">
    <citation type="journal article" date="2004" name="Nucleic Acids Res.">
        <title>Thermoadaptation trait revealed by the genome sequence of thermophilic Geobacillus kaustophilus.</title>
        <authorList>
            <person name="Takami H."/>
            <person name="Takaki Y."/>
            <person name="Chee G.-J."/>
            <person name="Nishi S."/>
            <person name="Shimamura S."/>
            <person name="Suzuki H."/>
            <person name="Matsui S."/>
            <person name="Uchiyama I."/>
        </authorList>
    </citation>
    <scope>NUCLEOTIDE SEQUENCE [LARGE SCALE GENOMIC DNA]</scope>
    <source>
        <strain>HTA426</strain>
    </source>
</reference>
<sequence>MKIATKYHGDIEIHEKDIVRFEQGIPGFLEEKQFVLLPLEDTPFIILQSVNTPALGFVLIEPFSYFPTYEIELDDNTLEQLQITGEQDVALYVILTVADPFDDTTANLQAPIVINARKRLGKQVILTNTNYKTKHRLFPEKVAK</sequence>
<name>FLIW_GEOKA</name>